<dbReference type="EMBL" id="AC010676">
    <property type="protein sequence ID" value="AAF03492.1"/>
    <property type="molecule type" value="Genomic_DNA"/>
</dbReference>
<dbReference type="EMBL" id="CP002686">
    <property type="protein sequence ID" value="AEE73651.1"/>
    <property type="molecule type" value="Genomic_DNA"/>
</dbReference>
<dbReference type="EMBL" id="CP002686">
    <property type="protein sequence ID" value="AEE73652.1"/>
    <property type="molecule type" value="Genomic_DNA"/>
</dbReference>
<dbReference type="EMBL" id="AF370262">
    <property type="protein sequence ID" value="AAK44077.1"/>
    <property type="molecule type" value="mRNA"/>
</dbReference>
<dbReference type="EMBL" id="AY063079">
    <property type="protein sequence ID" value="AAL34253.1"/>
    <property type="molecule type" value="mRNA"/>
</dbReference>
<dbReference type="EMBL" id="AY087647">
    <property type="protein sequence ID" value="AAM65185.1"/>
    <property type="molecule type" value="mRNA"/>
</dbReference>
<dbReference type="RefSeq" id="NP_001030616.1">
    <property type="nucleotide sequence ID" value="NM_001035539.1"/>
</dbReference>
<dbReference type="RefSeq" id="NP_186783.1">
    <property type="nucleotide sequence ID" value="NM_111000.3"/>
</dbReference>
<dbReference type="SMR" id="Q9SRI1"/>
<dbReference type="BioGRID" id="6549">
    <property type="interactions" value="6"/>
</dbReference>
<dbReference type="FunCoup" id="Q9SRI1">
    <property type="interactions" value="4474"/>
</dbReference>
<dbReference type="IntAct" id="Q9SRI1">
    <property type="interactions" value="3"/>
</dbReference>
<dbReference type="STRING" id="3702.Q9SRI1"/>
<dbReference type="PaxDb" id="3702-AT3G01340.1"/>
<dbReference type="ProMEX" id="Q9SRI1"/>
<dbReference type="ProteomicsDB" id="226654"/>
<dbReference type="DNASU" id="821216"/>
<dbReference type="EnsemblPlants" id="AT3G01340.1">
    <property type="protein sequence ID" value="AT3G01340.1"/>
    <property type="gene ID" value="AT3G01340"/>
</dbReference>
<dbReference type="EnsemblPlants" id="AT3G01340.2">
    <property type="protein sequence ID" value="AT3G01340.2"/>
    <property type="gene ID" value="AT3G01340"/>
</dbReference>
<dbReference type="GeneID" id="821216"/>
<dbReference type="Gramene" id="AT3G01340.1">
    <property type="protein sequence ID" value="AT3G01340.1"/>
    <property type="gene ID" value="AT3G01340"/>
</dbReference>
<dbReference type="Gramene" id="AT3G01340.2">
    <property type="protein sequence ID" value="AT3G01340.2"/>
    <property type="gene ID" value="AT3G01340"/>
</dbReference>
<dbReference type="KEGG" id="ath:AT3G01340"/>
<dbReference type="Araport" id="AT3G01340"/>
<dbReference type="TAIR" id="AT3G01340"/>
<dbReference type="eggNOG" id="KOG1332">
    <property type="taxonomic scope" value="Eukaryota"/>
</dbReference>
<dbReference type="HOGENOM" id="CLU_032441_0_1_1"/>
<dbReference type="InParanoid" id="Q9SRI1"/>
<dbReference type="OMA" id="NEWTQSH"/>
<dbReference type="OrthoDB" id="364224at2759"/>
<dbReference type="PhylomeDB" id="Q9SRI1"/>
<dbReference type="CD-CODE" id="4299E36E">
    <property type="entry name" value="Nucleolus"/>
</dbReference>
<dbReference type="PRO" id="PR:Q9SRI1"/>
<dbReference type="Proteomes" id="UP000006548">
    <property type="component" value="Chromosome 3"/>
</dbReference>
<dbReference type="ExpressionAtlas" id="Q9SRI1">
    <property type="expression patterns" value="baseline and differential"/>
</dbReference>
<dbReference type="GO" id="GO:0005783">
    <property type="term" value="C:endoplasmic reticulum"/>
    <property type="evidence" value="ECO:0007669"/>
    <property type="project" value="UniProtKB-SubCell"/>
</dbReference>
<dbReference type="GO" id="GO:0005794">
    <property type="term" value="C:Golgi apparatus"/>
    <property type="evidence" value="ECO:0007669"/>
    <property type="project" value="UniProtKB-SubCell"/>
</dbReference>
<dbReference type="GO" id="GO:0005198">
    <property type="term" value="F:structural molecule activity"/>
    <property type="evidence" value="ECO:0007669"/>
    <property type="project" value="InterPro"/>
</dbReference>
<dbReference type="GO" id="GO:0015031">
    <property type="term" value="P:protein transport"/>
    <property type="evidence" value="ECO:0007669"/>
    <property type="project" value="UniProtKB-KW"/>
</dbReference>
<dbReference type="GO" id="GO:0016192">
    <property type="term" value="P:vesicle-mediated transport"/>
    <property type="evidence" value="ECO:0007669"/>
    <property type="project" value="UniProtKB-KW"/>
</dbReference>
<dbReference type="FunFam" id="2.130.10.10:FF:000017">
    <property type="entry name" value="SEC13 homolog (S. cerevisiae)"/>
    <property type="match status" value="1"/>
</dbReference>
<dbReference type="Gene3D" id="2.130.10.10">
    <property type="entry name" value="YVTN repeat-like/Quinoprotein amine dehydrogenase"/>
    <property type="match status" value="1"/>
</dbReference>
<dbReference type="InterPro" id="IPR020472">
    <property type="entry name" value="G-protein_beta_WD-40_rep"/>
</dbReference>
<dbReference type="InterPro" id="IPR037363">
    <property type="entry name" value="Sec13/Seh1_fam"/>
</dbReference>
<dbReference type="InterPro" id="IPR015943">
    <property type="entry name" value="WD40/YVTN_repeat-like_dom_sf"/>
</dbReference>
<dbReference type="InterPro" id="IPR036322">
    <property type="entry name" value="WD40_repeat_dom_sf"/>
</dbReference>
<dbReference type="InterPro" id="IPR001680">
    <property type="entry name" value="WD40_rpt"/>
</dbReference>
<dbReference type="PANTHER" id="PTHR11024">
    <property type="entry name" value="NUCLEAR PORE COMPLEX PROTEIN SEC13 / SEH1 FAMILY MEMBER"/>
    <property type="match status" value="1"/>
</dbReference>
<dbReference type="PANTHER" id="PTHR11024:SF12">
    <property type="entry name" value="PROTEIN TRANSPORT PROTEIN SEC13 HOMOLOG A"/>
    <property type="match status" value="1"/>
</dbReference>
<dbReference type="Pfam" id="PF00400">
    <property type="entry name" value="WD40"/>
    <property type="match status" value="6"/>
</dbReference>
<dbReference type="PRINTS" id="PR00320">
    <property type="entry name" value="GPROTEINBRPT"/>
</dbReference>
<dbReference type="SMART" id="SM00320">
    <property type="entry name" value="WD40"/>
    <property type="match status" value="6"/>
</dbReference>
<dbReference type="SUPFAM" id="SSF50978">
    <property type="entry name" value="WD40 repeat-like"/>
    <property type="match status" value="1"/>
</dbReference>
<dbReference type="PROSITE" id="PS50082">
    <property type="entry name" value="WD_REPEATS_2"/>
    <property type="match status" value="2"/>
</dbReference>
<dbReference type="PROSITE" id="PS50294">
    <property type="entry name" value="WD_REPEATS_REGION"/>
    <property type="match status" value="1"/>
</dbReference>
<feature type="chain" id="PRO_0000430538" description="Protein transport protein SEC13 homolog A">
    <location>
        <begin position="1"/>
        <end position="302"/>
    </location>
</feature>
<feature type="repeat" description="WD 1" evidence="1">
    <location>
        <begin position="9"/>
        <end position="48"/>
    </location>
</feature>
<feature type="repeat" description="WD 2" evidence="1">
    <location>
        <begin position="54"/>
        <end position="95"/>
    </location>
</feature>
<feature type="repeat" description="WD 3" evidence="1">
    <location>
        <begin position="101"/>
        <end position="142"/>
    </location>
</feature>
<feature type="repeat" description="WD 4" evidence="1">
    <location>
        <begin position="148"/>
        <end position="201"/>
    </location>
</feature>
<feature type="repeat" description="WD 5" evidence="1">
    <location>
        <begin position="208"/>
        <end position="251"/>
    </location>
</feature>
<feature type="repeat" description="WD 6" evidence="1">
    <location>
        <begin position="257"/>
        <end position="296"/>
    </location>
</feature>
<feature type="sequence conflict" description="In Ref. 4; AAM65185." ref="4">
    <location>
        <position position="246"/>
    </location>
</feature>
<feature type="sequence conflict" description="In Ref. 4; AAM65185." ref="4">
    <original>G</original>
    <variation>A</variation>
    <location>
        <position position="271"/>
    </location>
</feature>
<reference key="1">
    <citation type="journal article" date="2000" name="Nature">
        <title>Sequence and analysis of chromosome 3 of the plant Arabidopsis thaliana.</title>
        <authorList>
            <person name="Salanoubat M."/>
            <person name="Lemcke K."/>
            <person name="Rieger M."/>
            <person name="Ansorge W."/>
            <person name="Unseld M."/>
            <person name="Fartmann B."/>
            <person name="Valle G."/>
            <person name="Bloecker H."/>
            <person name="Perez-Alonso M."/>
            <person name="Obermaier B."/>
            <person name="Delseny M."/>
            <person name="Boutry M."/>
            <person name="Grivell L.A."/>
            <person name="Mache R."/>
            <person name="Puigdomenech P."/>
            <person name="De Simone V."/>
            <person name="Choisne N."/>
            <person name="Artiguenave F."/>
            <person name="Robert C."/>
            <person name="Brottier P."/>
            <person name="Wincker P."/>
            <person name="Cattolico L."/>
            <person name="Weissenbach J."/>
            <person name="Saurin W."/>
            <person name="Quetier F."/>
            <person name="Schaefer M."/>
            <person name="Mueller-Auer S."/>
            <person name="Gabel C."/>
            <person name="Fuchs M."/>
            <person name="Benes V."/>
            <person name="Wurmbach E."/>
            <person name="Drzonek H."/>
            <person name="Erfle H."/>
            <person name="Jordan N."/>
            <person name="Bangert S."/>
            <person name="Wiedelmann R."/>
            <person name="Kranz H."/>
            <person name="Voss H."/>
            <person name="Holland R."/>
            <person name="Brandt P."/>
            <person name="Nyakatura G."/>
            <person name="Vezzi A."/>
            <person name="D'Angelo M."/>
            <person name="Pallavicini A."/>
            <person name="Toppo S."/>
            <person name="Simionati B."/>
            <person name="Conrad A."/>
            <person name="Hornischer K."/>
            <person name="Kauer G."/>
            <person name="Loehnert T.-H."/>
            <person name="Nordsiek G."/>
            <person name="Reichelt J."/>
            <person name="Scharfe M."/>
            <person name="Schoen O."/>
            <person name="Bargues M."/>
            <person name="Terol J."/>
            <person name="Climent J."/>
            <person name="Navarro P."/>
            <person name="Collado C."/>
            <person name="Perez-Perez A."/>
            <person name="Ottenwaelder B."/>
            <person name="Duchemin D."/>
            <person name="Cooke R."/>
            <person name="Laudie M."/>
            <person name="Berger-Llauro C."/>
            <person name="Purnelle B."/>
            <person name="Masuy D."/>
            <person name="de Haan M."/>
            <person name="Maarse A.C."/>
            <person name="Alcaraz J.-P."/>
            <person name="Cottet A."/>
            <person name="Casacuberta E."/>
            <person name="Monfort A."/>
            <person name="Argiriou A."/>
            <person name="Flores M."/>
            <person name="Liguori R."/>
            <person name="Vitale D."/>
            <person name="Mannhaupt G."/>
            <person name="Haase D."/>
            <person name="Schoof H."/>
            <person name="Rudd S."/>
            <person name="Zaccaria P."/>
            <person name="Mewes H.-W."/>
            <person name="Mayer K.F.X."/>
            <person name="Kaul S."/>
            <person name="Town C.D."/>
            <person name="Koo H.L."/>
            <person name="Tallon L.J."/>
            <person name="Jenkins J."/>
            <person name="Rooney T."/>
            <person name="Rizzo M."/>
            <person name="Walts A."/>
            <person name="Utterback T."/>
            <person name="Fujii C.Y."/>
            <person name="Shea T.P."/>
            <person name="Creasy T.H."/>
            <person name="Haas B."/>
            <person name="Maiti R."/>
            <person name="Wu D."/>
            <person name="Peterson J."/>
            <person name="Van Aken S."/>
            <person name="Pai G."/>
            <person name="Militscher J."/>
            <person name="Sellers P."/>
            <person name="Gill J.E."/>
            <person name="Feldblyum T.V."/>
            <person name="Preuss D."/>
            <person name="Lin X."/>
            <person name="Nierman W.C."/>
            <person name="Salzberg S.L."/>
            <person name="White O."/>
            <person name="Venter J.C."/>
            <person name="Fraser C.M."/>
            <person name="Kaneko T."/>
            <person name="Nakamura Y."/>
            <person name="Sato S."/>
            <person name="Kato T."/>
            <person name="Asamizu E."/>
            <person name="Sasamoto S."/>
            <person name="Kimura T."/>
            <person name="Idesawa K."/>
            <person name="Kawashima K."/>
            <person name="Kishida Y."/>
            <person name="Kiyokawa C."/>
            <person name="Kohara M."/>
            <person name="Matsumoto M."/>
            <person name="Matsuno A."/>
            <person name="Muraki A."/>
            <person name="Nakayama S."/>
            <person name="Nakazaki N."/>
            <person name="Shinpo S."/>
            <person name="Takeuchi C."/>
            <person name="Wada T."/>
            <person name="Watanabe A."/>
            <person name="Yamada M."/>
            <person name="Yasuda M."/>
            <person name="Tabata S."/>
        </authorList>
    </citation>
    <scope>NUCLEOTIDE SEQUENCE [LARGE SCALE GENOMIC DNA]</scope>
    <source>
        <strain>cv. Columbia</strain>
    </source>
</reference>
<reference key="2">
    <citation type="journal article" date="2017" name="Plant J.">
        <title>Araport11: a complete reannotation of the Arabidopsis thaliana reference genome.</title>
        <authorList>
            <person name="Cheng C.Y."/>
            <person name="Krishnakumar V."/>
            <person name="Chan A.P."/>
            <person name="Thibaud-Nissen F."/>
            <person name="Schobel S."/>
            <person name="Town C.D."/>
        </authorList>
    </citation>
    <scope>GENOME REANNOTATION</scope>
    <source>
        <strain>cv. Columbia</strain>
    </source>
</reference>
<reference key="3">
    <citation type="journal article" date="2003" name="Science">
        <title>Empirical analysis of transcriptional activity in the Arabidopsis genome.</title>
        <authorList>
            <person name="Yamada K."/>
            <person name="Lim J."/>
            <person name="Dale J.M."/>
            <person name="Chen H."/>
            <person name="Shinn P."/>
            <person name="Palm C.J."/>
            <person name="Southwick A.M."/>
            <person name="Wu H.C."/>
            <person name="Kim C.J."/>
            <person name="Nguyen M."/>
            <person name="Pham P.K."/>
            <person name="Cheuk R.F."/>
            <person name="Karlin-Newmann G."/>
            <person name="Liu S.X."/>
            <person name="Lam B."/>
            <person name="Sakano H."/>
            <person name="Wu T."/>
            <person name="Yu G."/>
            <person name="Miranda M."/>
            <person name="Quach H.L."/>
            <person name="Tripp M."/>
            <person name="Chang C.H."/>
            <person name="Lee J.M."/>
            <person name="Toriumi M.J."/>
            <person name="Chan M.M."/>
            <person name="Tang C.C."/>
            <person name="Onodera C.S."/>
            <person name="Deng J.M."/>
            <person name="Akiyama K."/>
            <person name="Ansari Y."/>
            <person name="Arakawa T."/>
            <person name="Banh J."/>
            <person name="Banno F."/>
            <person name="Bowser L."/>
            <person name="Brooks S.Y."/>
            <person name="Carninci P."/>
            <person name="Chao Q."/>
            <person name="Choy N."/>
            <person name="Enju A."/>
            <person name="Goldsmith A.D."/>
            <person name="Gurjal M."/>
            <person name="Hansen N.F."/>
            <person name="Hayashizaki Y."/>
            <person name="Johnson-Hopson C."/>
            <person name="Hsuan V.W."/>
            <person name="Iida K."/>
            <person name="Karnes M."/>
            <person name="Khan S."/>
            <person name="Koesema E."/>
            <person name="Ishida J."/>
            <person name="Jiang P.X."/>
            <person name="Jones T."/>
            <person name="Kawai J."/>
            <person name="Kamiya A."/>
            <person name="Meyers C."/>
            <person name="Nakajima M."/>
            <person name="Narusaka M."/>
            <person name="Seki M."/>
            <person name="Sakurai T."/>
            <person name="Satou M."/>
            <person name="Tamse R."/>
            <person name="Vaysberg M."/>
            <person name="Wallender E.K."/>
            <person name="Wong C."/>
            <person name="Yamamura Y."/>
            <person name="Yuan S."/>
            <person name="Shinozaki K."/>
            <person name="Davis R.W."/>
            <person name="Theologis A."/>
            <person name="Ecker J.R."/>
        </authorList>
    </citation>
    <scope>NUCLEOTIDE SEQUENCE [LARGE SCALE MRNA]</scope>
    <source>
        <strain>cv. Columbia</strain>
    </source>
</reference>
<reference key="4">
    <citation type="submission" date="2002-03" db="EMBL/GenBank/DDBJ databases">
        <title>Full-length cDNA from Arabidopsis thaliana.</title>
        <authorList>
            <person name="Brover V.V."/>
            <person name="Troukhan M.E."/>
            <person name="Alexandrov N.A."/>
            <person name="Lu Y.-P."/>
            <person name="Flavell R.B."/>
            <person name="Feldmann K.A."/>
        </authorList>
    </citation>
    <scope>NUCLEOTIDE SEQUENCE [LARGE SCALE MRNA]</scope>
</reference>
<reference key="5">
    <citation type="journal article" date="2013" name="Plant Cell">
        <title>MAIGO5 functions in protein export from Golgi-associated endoplasmic reticulum exit sites in Arabidopsis.</title>
        <authorList>
            <person name="Takagi J."/>
            <person name="Renna L."/>
            <person name="Takahashi H."/>
            <person name="Koumoto Y."/>
            <person name="Tamura K."/>
            <person name="Stefano G."/>
            <person name="Fukao Y."/>
            <person name="Kondo M."/>
            <person name="Nishimura M."/>
            <person name="Shimada T."/>
            <person name="Brandizzi F."/>
            <person name="Hara-Nishimura I."/>
        </authorList>
    </citation>
    <scope>IDENTIFICATION BY MASS SPECTROMETRY</scope>
    <scope>INTERACTION WITH MAG5; SEC31A AND SEC31B</scope>
</reference>
<protein>
    <recommendedName>
        <fullName evidence="4">Protein transport protein SEC13 homolog A</fullName>
    </recommendedName>
    <alternativeName>
        <fullName evidence="4">SEC13-like protein A</fullName>
    </alternativeName>
</protein>
<keyword id="KW-0256">Endoplasmic reticulum</keyword>
<keyword id="KW-0931">ER-Golgi transport</keyword>
<keyword id="KW-0333">Golgi apparatus</keyword>
<keyword id="KW-0653">Protein transport</keyword>
<keyword id="KW-1185">Reference proteome</keyword>
<keyword id="KW-0677">Repeat</keyword>
<keyword id="KW-0813">Transport</keyword>
<keyword id="KW-0853">WD repeat</keyword>
<sequence length="302" mass="32631">MPPQKIETGHSDTIHDVVMDYYGKRVATASSDCTIKITGVSNSGGSQHLATLTGHRGPVWQVAWAHPKFGSLLASCSYDGQIILWKEGNQNQWTQAHVFTDHKVSVNSIAWAPHELGLSLACGASDGNISVFSARADGGWDTTKIDQAHPVGVTSVSWAPATEPGALVSSGMIDPVYKLASGGCDSTVKVWKFSNGSWKMDCFPALNKHTDWVRDVAWAPNLGLPKSTIASGSEDGKVIIWTIGKEGEQWEGTVLKDFKTPVWRVSWSLTGNLLAVSDGNNNVTVWKESVDGEWEQVTVVEP</sequence>
<organism>
    <name type="scientific">Arabidopsis thaliana</name>
    <name type="common">Mouse-ear cress</name>
    <dbReference type="NCBI Taxonomy" id="3702"/>
    <lineage>
        <taxon>Eukaryota</taxon>
        <taxon>Viridiplantae</taxon>
        <taxon>Streptophyta</taxon>
        <taxon>Embryophyta</taxon>
        <taxon>Tracheophyta</taxon>
        <taxon>Spermatophyta</taxon>
        <taxon>Magnoliopsida</taxon>
        <taxon>eudicotyledons</taxon>
        <taxon>Gunneridae</taxon>
        <taxon>Pentapetalae</taxon>
        <taxon>rosids</taxon>
        <taxon>malvids</taxon>
        <taxon>Brassicales</taxon>
        <taxon>Brassicaceae</taxon>
        <taxon>Camelineae</taxon>
        <taxon>Arabidopsis</taxon>
    </lineage>
</organism>
<name>SC13A_ARATH</name>
<comment type="function">
    <text evidence="5">Required for protein transport from the endoplasmic reticulum to the Golgi apparatus.</text>
</comment>
<comment type="subunit">
    <text evidence="2">Interacts with MAG5, SEC31A and SEC31B.</text>
</comment>
<comment type="subcellular location">
    <subcellularLocation>
        <location evidence="5">Golgi apparatus</location>
    </subcellularLocation>
    <subcellularLocation>
        <location evidence="5">Endoplasmic reticulum</location>
    </subcellularLocation>
</comment>
<comment type="similarity">
    <text evidence="4">Belongs to the WD repeat SEC13 family.</text>
</comment>
<gene>
    <name evidence="3" type="primary">SEC13A</name>
    <name evidence="6" type="ordered locus">At3g01340</name>
    <name evidence="7" type="ORF">T22N4.3</name>
</gene>
<proteinExistence type="evidence at protein level"/>
<accession>Q9SRI1</accession>
<accession>Q8LAS2</accession>
<evidence type="ECO:0000255" key="1"/>
<evidence type="ECO:0000269" key="2">
    <source>
    </source>
</evidence>
<evidence type="ECO:0000303" key="3">
    <source>
    </source>
</evidence>
<evidence type="ECO:0000305" key="4"/>
<evidence type="ECO:0000305" key="5">
    <source>
    </source>
</evidence>
<evidence type="ECO:0000312" key="6">
    <source>
        <dbReference type="Araport" id="AT3G01340"/>
    </source>
</evidence>
<evidence type="ECO:0000312" key="7">
    <source>
        <dbReference type="EMBL" id="AAF03492.1"/>
    </source>
</evidence>